<comment type="function">
    <text evidence="1">Provides the (R)-glutamate required for cell wall biosynthesis.</text>
</comment>
<comment type="catalytic activity">
    <reaction evidence="1">
        <text>L-glutamate = D-glutamate</text>
        <dbReference type="Rhea" id="RHEA:12813"/>
        <dbReference type="ChEBI" id="CHEBI:29985"/>
        <dbReference type="ChEBI" id="CHEBI:29986"/>
        <dbReference type="EC" id="5.1.1.3"/>
    </reaction>
</comment>
<comment type="pathway">
    <text evidence="1">Cell wall biogenesis; peptidoglycan biosynthesis.</text>
</comment>
<comment type="similarity">
    <text evidence="1">Belongs to the aspartate/glutamate racemases family.</text>
</comment>
<proteinExistence type="inferred from homology"/>
<name>MURI_PSEAB</name>
<organism>
    <name type="scientific">Pseudomonas aeruginosa (strain UCBPP-PA14)</name>
    <dbReference type="NCBI Taxonomy" id="208963"/>
    <lineage>
        <taxon>Bacteria</taxon>
        <taxon>Pseudomonadati</taxon>
        <taxon>Pseudomonadota</taxon>
        <taxon>Gammaproteobacteria</taxon>
        <taxon>Pseudomonadales</taxon>
        <taxon>Pseudomonadaceae</taxon>
        <taxon>Pseudomonas</taxon>
    </lineage>
</organism>
<keyword id="KW-0133">Cell shape</keyword>
<keyword id="KW-0961">Cell wall biogenesis/degradation</keyword>
<keyword id="KW-0413">Isomerase</keyword>
<keyword id="KW-0573">Peptidoglycan synthesis</keyword>
<reference key="1">
    <citation type="journal article" date="2006" name="Genome Biol.">
        <title>Genomic analysis reveals that Pseudomonas aeruginosa virulence is combinatorial.</title>
        <authorList>
            <person name="Lee D.G."/>
            <person name="Urbach J.M."/>
            <person name="Wu G."/>
            <person name="Liberati N.T."/>
            <person name="Feinbaum R.L."/>
            <person name="Miyata S."/>
            <person name="Diggins L.T."/>
            <person name="He J."/>
            <person name="Saucier M."/>
            <person name="Deziel E."/>
            <person name="Friedman L."/>
            <person name="Li L."/>
            <person name="Grills G."/>
            <person name="Montgomery K."/>
            <person name="Kucherlapati R."/>
            <person name="Rahme L.G."/>
            <person name="Ausubel F.M."/>
        </authorList>
    </citation>
    <scope>NUCLEOTIDE SEQUENCE [LARGE SCALE GENOMIC DNA]</scope>
    <source>
        <strain>UCBPP-PA14</strain>
    </source>
</reference>
<protein>
    <recommendedName>
        <fullName evidence="1">Glutamate racemase</fullName>
        <ecNumber evidence="1">5.1.1.3</ecNumber>
    </recommendedName>
</protein>
<accession>Q02G12</accession>
<feature type="chain" id="PRO_1000047597" description="Glutamate racemase">
    <location>
        <begin position="1"/>
        <end position="265"/>
    </location>
</feature>
<feature type="active site" description="Proton donor/acceptor" evidence="1">
    <location>
        <position position="75"/>
    </location>
</feature>
<feature type="active site" description="Proton donor/acceptor" evidence="1">
    <location>
        <position position="186"/>
    </location>
</feature>
<feature type="binding site" evidence="1">
    <location>
        <begin position="12"/>
        <end position="13"/>
    </location>
    <ligand>
        <name>substrate</name>
    </ligand>
</feature>
<feature type="binding site" evidence="1">
    <location>
        <begin position="44"/>
        <end position="45"/>
    </location>
    <ligand>
        <name>substrate</name>
    </ligand>
</feature>
<feature type="binding site" evidence="1">
    <location>
        <begin position="76"/>
        <end position="77"/>
    </location>
    <ligand>
        <name>substrate</name>
    </ligand>
</feature>
<feature type="binding site" evidence="1">
    <location>
        <begin position="187"/>
        <end position="188"/>
    </location>
    <ligand>
        <name>substrate</name>
    </ligand>
</feature>
<gene>
    <name evidence="1" type="primary">murI</name>
    <name type="ordered locus">PA14_61660</name>
</gene>
<dbReference type="EC" id="5.1.1.3" evidence="1"/>
<dbReference type="EMBL" id="CP000438">
    <property type="protein sequence ID" value="ABJ14043.1"/>
    <property type="molecule type" value="Genomic_DNA"/>
</dbReference>
<dbReference type="RefSeq" id="WP_003141625.1">
    <property type="nucleotide sequence ID" value="NZ_CP034244.1"/>
</dbReference>
<dbReference type="SMR" id="Q02G12"/>
<dbReference type="KEGG" id="pau:PA14_61660"/>
<dbReference type="PseudoCAP" id="PA14_61660"/>
<dbReference type="HOGENOM" id="CLU_052344_1_0_6"/>
<dbReference type="BioCyc" id="PAER208963:G1G74-5213-MONOMER"/>
<dbReference type="UniPathway" id="UPA00219"/>
<dbReference type="Proteomes" id="UP000000653">
    <property type="component" value="Chromosome"/>
</dbReference>
<dbReference type="GO" id="GO:0008881">
    <property type="term" value="F:glutamate racemase activity"/>
    <property type="evidence" value="ECO:0007669"/>
    <property type="project" value="UniProtKB-UniRule"/>
</dbReference>
<dbReference type="GO" id="GO:0071555">
    <property type="term" value="P:cell wall organization"/>
    <property type="evidence" value="ECO:0007669"/>
    <property type="project" value="UniProtKB-KW"/>
</dbReference>
<dbReference type="GO" id="GO:0009252">
    <property type="term" value="P:peptidoglycan biosynthetic process"/>
    <property type="evidence" value="ECO:0007669"/>
    <property type="project" value="UniProtKB-UniRule"/>
</dbReference>
<dbReference type="GO" id="GO:0008360">
    <property type="term" value="P:regulation of cell shape"/>
    <property type="evidence" value="ECO:0007669"/>
    <property type="project" value="UniProtKB-KW"/>
</dbReference>
<dbReference type="FunFam" id="3.40.50.1860:FF:000001">
    <property type="entry name" value="Glutamate racemase"/>
    <property type="match status" value="1"/>
</dbReference>
<dbReference type="Gene3D" id="3.40.50.1860">
    <property type="match status" value="2"/>
</dbReference>
<dbReference type="HAMAP" id="MF_00258">
    <property type="entry name" value="Glu_racemase"/>
    <property type="match status" value="1"/>
</dbReference>
<dbReference type="InterPro" id="IPR015942">
    <property type="entry name" value="Asp/Glu/hydantoin_racemase"/>
</dbReference>
<dbReference type="InterPro" id="IPR001920">
    <property type="entry name" value="Asp/Glu_race"/>
</dbReference>
<dbReference type="InterPro" id="IPR018187">
    <property type="entry name" value="Asp/Glu_racemase_AS_1"/>
</dbReference>
<dbReference type="InterPro" id="IPR033134">
    <property type="entry name" value="Asp/Glu_racemase_AS_2"/>
</dbReference>
<dbReference type="InterPro" id="IPR004391">
    <property type="entry name" value="Glu_race"/>
</dbReference>
<dbReference type="NCBIfam" id="TIGR00067">
    <property type="entry name" value="glut_race"/>
    <property type="match status" value="1"/>
</dbReference>
<dbReference type="PANTHER" id="PTHR21198">
    <property type="entry name" value="GLUTAMATE RACEMASE"/>
    <property type="match status" value="1"/>
</dbReference>
<dbReference type="PANTHER" id="PTHR21198:SF2">
    <property type="entry name" value="GLUTAMATE RACEMASE"/>
    <property type="match status" value="1"/>
</dbReference>
<dbReference type="Pfam" id="PF01177">
    <property type="entry name" value="Asp_Glu_race"/>
    <property type="match status" value="1"/>
</dbReference>
<dbReference type="SUPFAM" id="SSF53681">
    <property type="entry name" value="Aspartate/glutamate racemase"/>
    <property type="match status" value="2"/>
</dbReference>
<dbReference type="PROSITE" id="PS00923">
    <property type="entry name" value="ASP_GLU_RACEMASE_1"/>
    <property type="match status" value="1"/>
</dbReference>
<dbReference type="PROSITE" id="PS00924">
    <property type="entry name" value="ASP_GLU_RACEMASE_2"/>
    <property type="match status" value="1"/>
</dbReference>
<evidence type="ECO:0000255" key="1">
    <source>
        <dbReference type="HAMAP-Rule" id="MF_00258"/>
    </source>
</evidence>
<sequence>MAVESAAVGVFDSGVGGLSVLREIRARLPSESLLYVADNAHVPYGEKSAEYIRERCERIGDFLLEQGAKALVLACNTATAAAAAELRERYPQVQLVAMEPAVKPAAAATRNGRVGVLATTGTLKSARFAALLDRFASDVQVFTQPCPGLVERIEAGDLYGPQTRALLERLLAPILEQGCDTLILGCTHYPFVKPLLAELIPAEMAVIDTGAAVARQLERVLSARALLASGQAATPRFWTSALPEEMERILPILWGSPESVGKLVV</sequence>